<accession>B7H636</accession>
<feature type="chain" id="PRO_1000118777" description="3-phosphoshikimate 1-carboxyvinyltransferase">
    <location>
        <begin position="1"/>
        <end position="429"/>
    </location>
</feature>
<feature type="active site" description="Proton acceptor" evidence="1">
    <location>
        <position position="316"/>
    </location>
</feature>
<feature type="binding site" evidence="1">
    <location>
        <position position="23"/>
    </location>
    <ligand>
        <name>3-phosphoshikimate</name>
        <dbReference type="ChEBI" id="CHEBI:145989"/>
    </ligand>
</feature>
<feature type="binding site" evidence="1">
    <location>
        <position position="23"/>
    </location>
    <ligand>
        <name>phosphoenolpyruvate</name>
        <dbReference type="ChEBI" id="CHEBI:58702"/>
    </ligand>
</feature>
<feature type="binding site" evidence="1">
    <location>
        <position position="24"/>
    </location>
    <ligand>
        <name>3-phosphoshikimate</name>
        <dbReference type="ChEBI" id="CHEBI:145989"/>
    </ligand>
</feature>
<feature type="binding site" evidence="1">
    <location>
        <position position="28"/>
    </location>
    <ligand>
        <name>3-phosphoshikimate</name>
        <dbReference type="ChEBI" id="CHEBI:145989"/>
    </ligand>
</feature>
<feature type="binding site" evidence="1">
    <location>
        <position position="95"/>
    </location>
    <ligand>
        <name>phosphoenolpyruvate</name>
        <dbReference type="ChEBI" id="CHEBI:58702"/>
    </ligand>
</feature>
<feature type="binding site" evidence="1">
    <location>
        <position position="123"/>
    </location>
    <ligand>
        <name>phosphoenolpyruvate</name>
        <dbReference type="ChEBI" id="CHEBI:58702"/>
    </ligand>
</feature>
<feature type="binding site" evidence="1">
    <location>
        <position position="168"/>
    </location>
    <ligand>
        <name>3-phosphoshikimate</name>
        <dbReference type="ChEBI" id="CHEBI:145989"/>
    </ligand>
</feature>
<feature type="binding site" evidence="1">
    <location>
        <position position="170"/>
    </location>
    <ligand>
        <name>3-phosphoshikimate</name>
        <dbReference type="ChEBI" id="CHEBI:145989"/>
    </ligand>
</feature>
<feature type="binding site" evidence="1">
    <location>
        <position position="170"/>
    </location>
    <ligand>
        <name>phosphoenolpyruvate</name>
        <dbReference type="ChEBI" id="CHEBI:58702"/>
    </ligand>
</feature>
<feature type="binding site" evidence="1">
    <location>
        <position position="316"/>
    </location>
    <ligand>
        <name>3-phosphoshikimate</name>
        <dbReference type="ChEBI" id="CHEBI:145989"/>
    </ligand>
</feature>
<feature type="binding site" evidence="1">
    <location>
        <position position="343"/>
    </location>
    <ligand>
        <name>3-phosphoshikimate</name>
        <dbReference type="ChEBI" id="CHEBI:145989"/>
    </ligand>
</feature>
<feature type="binding site" evidence="1">
    <location>
        <position position="347"/>
    </location>
    <ligand>
        <name>phosphoenolpyruvate</name>
        <dbReference type="ChEBI" id="CHEBI:58702"/>
    </ligand>
</feature>
<feature type="binding site" evidence="1">
    <location>
        <position position="389"/>
    </location>
    <ligand>
        <name>phosphoenolpyruvate</name>
        <dbReference type="ChEBI" id="CHEBI:58702"/>
    </ligand>
</feature>
<name>AROA_BACC4</name>
<protein>
    <recommendedName>
        <fullName evidence="1">3-phosphoshikimate 1-carboxyvinyltransferase</fullName>
        <ecNumber evidence="1">2.5.1.19</ecNumber>
    </recommendedName>
    <alternativeName>
        <fullName evidence="1">5-enolpyruvylshikimate-3-phosphate synthase</fullName>
        <shortName evidence="1">EPSP synthase</shortName>
        <shortName evidence="1">EPSPS</shortName>
    </alternativeName>
</protein>
<keyword id="KW-0028">Amino-acid biosynthesis</keyword>
<keyword id="KW-0057">Aromatic amino acid biosynthesis</keyword>
<keyword id="KW-0963">Cytoplasm</keyword>
<keyword id="KW-0808">Transferase</keyword>
<dbReference type="EC" id="2.5.1.19" evidence="1"/>
<dbReference type="EMBL" id="CP001176">
    <property type="protein sequence ID" value="ACK62102.1"/>
    <property type="molecule type" value="Genomic_DNA"/>
</dbReference>
<dbReference type="RefSeq" id="WP_000664630.1">
    <property type="nucleotide sequence ID" value="NZ_VEHB01000001.1"/>
</dbReference>
<dbReference type="SMR" id="B7H636"/>
<dbReference type="KEGG" id="bcb:BCB4264_A2956"/>
<dbReference type="HOGENOM" id="CLU_024321_0_1_9"/>
<dbReference type="UniPathway" id="UPA00053">
    <property type="reaction ID" value="UER00089"/>
</dbReference>
<dbReference type="Proteomes" id="UP000007096">
    <property type="component" value="Chromosome"/>
</dbReference>
<dbReference type="GO" id="GO:0005737">
    <property type="term" value="C:cytoplasm"/>
    <property type="evidence" value="ECO:0007669"/>
    <property type="project" value="UniProtKB-SubCell"/>
</dbReference>
<dbReference type="GO" id="GO:0003866">
    <property type="term" value="F:3-phosphoshikimate 1-carboxyvinyltransferase activity"/>
    <property type="evidence" value="ECO:0007669"/>
    <property type="project" value="UniProtKB-UniRule"/>
</dbReference>
<dbReference type="GO" id="GO:0008652">
    <property type="term" value="P:amino acid biosynthetic process"/>
    <property type="evidence" value="ECO:0007669"/>
    <property type="project" value="UniProtKB-KW"/>
</dbReference>
<dbReference type="GO" id="GO:0009073">
    <property type="term" value="P:aromatic amino acid family biosynthetic process"/>
    <property type="evidence" value="ECO:0007669"/>
    <property type="project" value="UniProtKB-KW"/>
</dbReference>
<dbReference type="GO" id="GO:0009423">
    <property type="term" value="P:chorismate biosynthetic process"/>
    <property type="evidence" value="ECO:0007669"/>
    <property type="project" value="UniProtKB-UniRule"/>
</dbReference>
<dbReference type="CDD" id="cd01556">
    <property type="entry name" value="EPSP_synthase"/>
    <property type="match status" value="1"/>
</dbReference>
<dbReference type="FunFam" id="3.65.10.10:FF:000005">
    <property type="entry name" value="3-phosphoshikimate 1-carboxyvinyltransferase"/>
    <property type="match status" value="1"/>
</dbReference>
<dbReference type="FunFam" id="3.65.10.10:FF:000006">
    <property type="entry name" value="3-phosphoshikimate 1-carboxyvinyltransferase"/>
    <property type="match status" value="1"/>
</dbReference>
<dbReference type="Gene3D" id="3.65.10.10">
    <property type="entry name" value="Enolpyruvate transferase domain"/>
    <property type="match status" value="2"/>
</dbReference>
<dbReference type="HAMAP" id="MF_00210">
    <property type="entry name" value="EPSP_synth"/>
    <property type="match status" value="1"/>
</dbReference>
<dbReference type="InterPro" id="IPR001986">
    <property type="entry name" value="Enolpyruvate_Tfrase_dom"/>
</dbReference>
<dbReference type="InterPro" id="IPR036968">
    <property type="entry name" value="Enolpyruvate_Tfrase_sf"/>
</dbReference>
<dbReference type="InterPro" id="IPR006264">
    <property type="entry name" value="EPSP_synthase"/>
</dbReference>
<dbReference type="InterPro" id="IPR023193">
    <property type="entry name" value="EPSP_synthase_CS"/>
</dbReference>
<dbReference type="InterPro" id="IPR013792">
    <property type="entry name" value="RNA3'P_cycl/enolpyr_Trfase_a/b"/>
</dbReference>
<dbReference type="NCBIfam" id="TIGR01356">
    <property type="entry name" value="aroA"/>
    <property type="match status" value="1"/>
</dbReference>
<dbReference type="PANTHER" id="PTHR21090">
    <property type="entry name" value="AROM/DEHYDROQUINATE SYNTHASE"/>
    <property type="match status" value="1"/>
</dbReference>
<dbReference type="PANTHER" id="PTHR21090:SF5">
    <property type="entry name" value="PENTAFUNCTIONAL AROM POLYPEPTIDE"/>
    <property type="match status" value="1"/>
</dbReference>
<dbReference type="Pfam" id="PF00275">
    <property type="entry name" value="EPSP_synthase"/>
    <property type="match status" value="1"/>
</dbReference>
<dbReference type="PIRSF" id="PIRSF000505">
    <property type="entry name" value="EPSPS"/>
    <property type="match status" value="1"/>
</dbReference>
<dbReference type="SUPFAM" id="SSF55205">
    <property type="entry name" value="EPT/RTPC-like"/>
    <property type="match status" value="1"/>
</dbReference>
<dbReference type="PROSITE" id="PS00104">
    <property type="entry name" value="EPSP_SYNTHASE_1"/>
    <property type="match status" value="1"/>
</dbReference>
<dbReference type="PROSITE" id="PS00885">
    <property type="entry name" value="EPSP_SYNTHASE_2"/>
    <property type="match status" value="1"/>
</dbReference>
<comment type="function">
    <text evidence="1">Catalyzes the transfer of the enolpyruvyl moiety of phosphoenolpyruvate (PEP) to the 5-hydroxyl of shikimate-3-phosphate (S3P) to produce enolpyruvyl shikimate-3-phosphate and inorganic phosphate.</text>
</comment>
<comment type="catalytic activity">
    <reaction evidence="1">
        <text>3-phosphoshikimate + phosphoenolpyruvate = 5-O-(1-carboxyvinyl)-3-phosphoshikimate + phosphate</text>
        <dbReference type="Rhea" id="RHEA:21256"/>
        <dbReference type="ChEBI" id="CHEBI:43474"/>
        <dbReference type="ChEBI" id="CHEBI:57701"/>
        <dbReference type="ChEBI" id="CHEBI:58702"/>
        <dbReference type="ChEBI" id="CHEBI:145989"/>
        <dbReference type="EC" id="2.5.1.19"/>
    </reaction>
    <physiologicalReaction direction="left-to-right" evidence="1">
        <dbReference type="Rhea" id="RHEA:21257"/>
    </physiologicalReaction>
</comment>
<comment type="pathway">
    <text evidence="1">Metabolic intermediate biosynthesis; chorismate biosynthesis; chorismate from D-erythrose 4-phosphate and phosphoenolpyruvate: step 6/7.</text>
</comment>
<comment type="subunit">
    <text evidence="1">Monomer.</text>
</comment>
<comment type="subcellular location">
    <subcellularLocation>
        <location evidence="1">Cytoplasm</location>
    </subcellularLocation>
</comment>
<comment type="similarity">
    <text evidence="1">Belongs to the EPSP synthase family.</text>
</comment>
<organism>
    <name type="scientific">Bacillus cereus (strain B4264)</name>
    <dbReference type="NCBI Taxonomy" id="405532"/>
    <lineage>
        <taxon>Bacteria</taxon>
        <taxon>Bacillati</taxon>
        <taxon>Bacillota</taxon>
        <taxon>Bacilli</taxon>
        <taxon>Bacillales</taxon>
        <taxon>Bacillaceae</taxon>
        <taxon>Bacillus</taxon>
        <taxon>Bacillus cereus group</taxon>
    </lineage>
</organism>
<sequence length="429" mass="45315">MKERTIQPVNNGLNGNITIPGDKSISHRAVMFGSIAEGKTTIKGFLPGADCLSTISCFKEMGVEITQNGDEVTVVGKGLEGLQEPKAVLDVGNSGTTIRLMSGILANTPFFSCVQGDESIAKRPMKRVTNPLKQMGANIDGREEGTFTPLTIRGGDLKAIEYISPVASAQVKSAILLAGLRAEGVTAVTEPHISRDHTERMLEAFGVKVTREGKTVKLSGGQKLTATDIQVPGDVSSAAFFLVAGAIIPNSKLVLQNVGMNPTRTGIIDVLEKMGATFTVDLINEGASEPAANITIETSSLKGIEIGGDIIPRLIDEIPVIALAATQAEGITVIKDAHELKVKETNRIDTVVAELTKLGARIEATDDGMIIYGKSALKGNTVNSYGDHRIGMMLAIAGCLAEGKTIIEDAEAVGVSYPTFFDELQKLAK</sequence>
<reference key="1">
    <citation type="submission" date="2008-10" db="EMBL/GenBank/DDBJ databases">
        <title>Genome sequence of Bacillus cereus B4264.</title>
        <authorList>
            <person name="Dodson R.J."/>
            <person name="Durkin A.S."/>
            <person name="Rosovitz M.J."/>
            <person name="Rasko D.A."/>
            <person name="Hoffmaster A."/>
            <person name="Ravel J."/>
            <person name="Sutton G."/>
        </authorList>
    </citation>
    <scope>NUCLEOTIDE SEQUENCE [LARGE SCALE GENOMIC DNA]</scope>
    <source>
        <strain>B4264</strain>
    </source>
</reference>
<evidence type="ECO:0000255" key="1">
    <source>
        <dbReference type="HAMAP-Rule" id="MF_00210"/>
    </source>
</evidence>
<proteinExistence type="inferred from homology"/>
<gene>
    <name evidence="1" type="primary">aroA</name>
    <name type="ordered locus">BCB4264_A2956</name>
</gene>